<dbReference type="EMBL" id="CP000948">
    <property type="protein sequence ID" value="ACB04831.1"/>
    <property type="molecule type" value="Genomic_DNA"/>
</dbReference>
<dbReference type="RefSeq" id="WP_000999947.1">
    <property type="nucleotide sequence ID" value="NC_010473.1"/>
</dbReference>
<dbReference type="BMRB" id="B1XAH3"/>
<dbReference type="SMR" id="B1XAH3"/>
<dbReference type="GeneID" id="93778137"/>
<dbReference type="KEGG" id="ecd:ECDH10B_3998"/>
<dbReference type="HOGENOM" id="CLU_080880_3_0_6"/>
<dbReference type="GO" id="GO:0005829">
    <property type="term" value="C:cytosol"/>
    <property type="evidence" value="ECO:0007669"/>
    <property type="project" value="TreeGrafter"/>
</dbReference>
<dbReference type="GO" id="GO:0008199">
    <property type="term" value="F:ferric iron binding"/>
    <property type="evidence" value="ECO:0007669"/>
    <property type="project" value="InterPro"/>
</dbReference>
<dbReference type="GO" id="GO:0008198">
    <property type="term" value="F:ferrous iron binding"/>
    <property type="evidence" value="ECO:0007669"/>
    <property type="project" value="TreeGrafter"/>
</dbReference>
<dbReference type="GO" id="GO:0016226">
    <property type="term" value="P:iron-sulfur cluster assembly"/>
    <property type="evidence" value="ECO:0007669"/>
    <property type="project" value="UniProtKB-UniRule"/>
</dbReference>
<dbReference type="CDD" id="cd00503">
    <property type="entry name" value="Frataxin"/>
    <property type="match status" value="1"/>
</dbReference>
<dbReference type="FunFam" id="3.30.920.10:FF:000001">
    <property type="entry name" value="Iron-sulfur cluster assembly protein CyaY"/>
    <property type="match status" value="1"/>
</dbReference>
<dbReference type="Gene3D" id="3.30.920.10">
    <property type="entry name" value="Frataxin/CyaY"/>
    <property type="match status" value="1"/>
</dbReference>
<dbReference type="HAMAP" id="MF_00142">
    <property type="entry name" value="CyaY"/>
    <property type="match status" value="1"/>
</dbReference>
<dbReference type="InterPro" id="IPR047584">
    <property type="entry name" value="CyaY"/>
</dbReference>
<dbReference type="InterPro" id="IPR002908">
    <property type="entry name" value="Frataxin/CyaY"/>
</dbReference>
<dbReference type="InterPro" id="IPR036524">
    <property type="entry name" value="Frataxin/CyaY_sf"/>
</dbReference>
<dbReference type="InterPro" id="IPR020895">
    <property type="entry name" value="Frataxin_CS"/>
</dbReference>
<dbReference type="NCBIfam" id="TIGR03421">
    <property type="entry name" value="FeS_CyaY"/>
    <property type="match status" value="1"/>
</dbReference>
<dbReference type="PANTHER" id="PTHR16821">
    <property type="entry name" value="FRATAXIN"/>
    <property type="match status" value="1"/>
</dbReference>
<dbReference type="PANTHER" id="PTHR16821:SF2">
    <property type="entry name" value="FRATAXIN, MITOCHONDRIAL"/>
    <property type="match status" value="1"/>
</dbReference>
<dbReference type="Pfam" id="PF01491">
    <property type="entry name" value="Frataxin_Cyay"/>
    <property type="match status" value="1"/>
</dbReference>
<dbReference type="SMART" id="SM01219">
    <property type="entry name" value="Frataxin_Cyay"/>
    <property type="match status" value="1"/>
</dbReference>
<dbReference type="SUPFAM" id="SSF55387">
    <property type="entry name" value="Frataxin/Nqo15-like"/>
    <property type="match status" value="1"/>
</dbReference>
<dbReference type="PROSITE" id="PS01344">
    <property type="entry name" value="FRATAXIN_1"/>
    <property type="match status" value="1"/>
</dbReference>
<dbReference type="PROSITE" id="PS50810">
    <property type="entry name" value="FRATAXIN_2"/>
    <property type="match status" value="1"/>
</dbReference>
<organism>
    <name type="scientific">Escherichia coli (strain K12 / DH10B)</name>
    <dbReference type="NCBI Taxonomy" id="316385"/>
    <lineage>
        <taxon>Bacteria</taxon>
        <taxon>Pseudomonadati</taxon>
        <taxon>Pseudomonadota</taxon>
        <taxon>Gammaproteobacteria</taxon>
        <taxon>Enterobacterales</taxon>
        <taxon>Enterobacteriaceae</taxon>
        <taxon>Escherichia</taxon>
    </lineage>
</organism>
<gene>
    <name evidence="1" type="primary">cyaY</name>
    <name type="ordered locus">ECDH10B_3998</name>
</gene>
<reference key="1">
    <citation type="journal article" date="2008" name="J. Bacteriol.">
        <title>The complete genome sequence of Escherichia coli DH10B: insights into the biology of a laboratory workhorse.</title>
        <authorList>
            <person name="Durfee T."/>
            <person name="Nelson R."/>
            <person name="Baldwin S."/>
            <person name="Plunkett G. III"/>
            <person name="Burland V."/>
            <person name="Mau B."/>
            <person name="Petrosino J.F."/>
            <person name="Qin X."/>
            <person name="Muzny D.M."/>
            <person name="Ayele M."/>
            <person name="Gibbs R.A."/>
            <person name="Csorgo B."/>
            <person name="Posfai G."/>
            <person name="Weinstock G.M."/>
            <person name="Blattner F.R."/>
        </authorList>
    </citation>
    <scope>NUCLEOTIDE SEQUENCE [LARGE SCALE GENOMIC DNA]</scope>
    <source>
        <strain>K12 / DH10B</strain>
    </source>
</reference>
<protein>
    <recommendedName>
        <fullName evidence="1">Iron-sulfur cluster assembly protein CyaY</fullName>
    </recommendedName>
</protein>
<feature type="chain" id="PRO_1000096245" description="Iron-sulfur cluster assembly protein CyaY">
    <location>
        <begin position="1"/>
        <end position="106"/>
    </location>
</feature>
<proteinExistence type="inferred from homology"/>
<accession>B1XAH3</accession>
<sequence length="106" mass="12231">MNDSEFHRLADQLWLTIEERLDDWDGDSDIDCEINGGVLTITFENGSKIIINRQEPLHQVWLATKQGGYHFDLKGDEWICDRSGETFWDLLEQAATQQAGETVSFR</sequence>
<name>CYAY_ECODH</name>
<comment type="function">
    <text evidence="1">Involved in iron-sulfur (Fe-S) cluster assembly. May act as a regulator of Fe-S biogenesis.</text>
</comment>
<comment type="similarity">
    <text evidence="1">Belongs to the frataxin family.</text>
</comment>
<keyword id="KW-0408">Iron</keyword>
<keyword id="KW-0479">Metal-binding</keyword>
<evidence type="ECO:0000255" key="1">
    <source>
        <dbReference type="HAMAP-Rule" id="MF_00142"/>
    </source>
</evidence>